<comment type="function">
    <text evidence="1">One of the primary rRNA binding proteins, it binds specifically to the 5'-end of 16S ribosomal RNA.</text>
</comment>
<comment type="subunit">
    <text evidence="1">Part of the 30S ribosomal subunit.</text>
</comment>
<comment type="similarity">
    <text evidence="1">Belongs to the universal ribosomal protein uS17 family.</text>
</comment>
<dbReference type="EMBL" id="CP000544">
    <property type="protein sequence ID" value="ABM61625.1"/>
    <property type="molecule type" value="Genomic_DNA"/>
</dbReference>
<dbReference type="RefSeq" id="WP_011813648.1">
    <property type="nucleotide sequence ID" value="NC_008789.1"/>
</dbReference>
<dbReference type="SMR" id="A1WVB3"/>
<dbReference type="STRING" id="349124.Hhal_0849"/>
<dbReference type="KEGG" id="hha:Hhal_0849"/>
<dbReference type="eggNOG" id="COG0186">
    <property type="taxonomic scope" value="Bacteria"/>
</dbReference>
<dbReference type="HOGENOM" id="CLU_073626_1_1_6"/>
<dbReference type="OrthoDB" id="9811714at2"/>
<dbReference type="Proteomes" id="UP000000647">
    <property type="component" value="Chromosome"/>
</dbReference>
<dbReference type="GO" id="GO:0022627">
    <property type="term" value="C:cytosolic small ribosomal subunit"/>
    <property type="evidence" value="ECO:0007669"/>
    <property type="project" value="TreeGrafter"/>
</dbReference>
<dbReference type="GO" id="GO:0019843">
    <property type="term" value="F:rRNA binding"/>
    <property type="evidence" value="ECO:0007669"/>
    <property type="project" value="UniProtKB-UniRule"/>
</dbReference>
<dbReference type="GO" id="GO:0003735">
    <property type="term" value="F:structural constituent of ribosome"/>
    <property type="evidence" value="ECO:0007669"/>
    <property type="project" value="InterPro"/>
</dbReference>
<dbReference type="GO" id="GO:0006412">
    <property type="term" value="P:translation"/>
    <property type="evidence" value="ECO:0007669"/>
    <property type="project" value="UniProtKB-UniRule"/>
</dbReference>
<dbReference type="CDD" id="cd00364">
    <property type="entry name" value="Ribosomal_uS17"/>
    <property type="match status" value="1"/>
</dbReference>
<dbReference type="Gene3D" id="2.40.50.140">
    <property type="entry name" value="Nucleic acid-binding proteins"/>
    <property type="match status" value="1"/>
</dbReference>
<dbReference type="HAMAP" id="MF_01345_B">
    <property type="entry name" value="Ribosomal_uS17_B"/>
    <property type="match status" value="1"/>
</dbReference>
<dbReference type="InterPro" id="IPR012340">
    <property type="entry name" value="NA-bd_OB-fold"/>
</dbReference>
<dbReference type="InterPro" id="IPR000266">
    <property type="entry name" value="Ribosomal_uS17"/>
</dbReference>
<dbReference type="InterPro" id="IPR019984">
    <property type="entry name" value="Ribosomal_uS17_bact/chlr"/>
</dbReference>
<dbReference type="InterPro" id="IPR019979">
    <property type="entry name" value="Ribosomal_uS17_CS"/>
</dbReference>
<dbReference type="NCBIfam" id="NF004123">
    <property type="entry name" value="PRK05610.1"/>
    <property type="match status" value="1"/>
</dbReference>
<dbReference type="NCBIfam" id="TIGR03635">
    <property type="entry name" value="uS17_bact"/>
    <property type="match status" value="1"/>
</dbReference>
<dbReference type="PANTHER" id="PTHR10744">
    <property type="entry name" value="40S RIBOSOMAL PROTEIN S11 FAMILY MEMBER"/>
    <property type="match status" value="1"/>
</dbReference>
<dbReference type="PANTHER" id="PTHR10744:SF1">
    <property type="entry name" value="SMALL RIBOSOMAL SUBUNIT PROTEIN US17M"/>
    <property type="match status" value="1"/>
</dbReference>
<dbReference type="Pfam" id="PF00366">
    <property type="entry name" value="Ribosomal_S17"/>
    <property type="match status" value="1"/>
</dbReference>
<dbReference type="PRINTS" id="PR00973">
    <property type="entry name" value="RIBOSOMALS17"/>
</dbReference>
<dbReference type="SUPFAM" id="SSF50249">
    <property type="entry name" value="Nucleic acid-binding proteins"/>
    <property type="match status" value="1"/>
</dbReference>
<dbReference type="PROSITE" id="PS00056">
    <property type="entry name" value="RIBOSOMAL_S17"/>
    <property type="match status" value="1"/>
</dbReference>
<reference key="1">
    <citation type="submission" date="2006-12" db="EMBL/GenBank/DDBJ databases">
        <title>Complete sequence of Halorhodospira halophila SL1.</title>
        <authorList>
            <consortium name="US DOE Joint Genome Institute"/>
            <person name="Copeland A."/>
            <person name="Lucas S."/>
            <person name="Lapidus A."/>
            <person name="Barry K."/>
            <person name="Detter J.C."/>
            <person name="Glavina del Rio T."/>
            <person name="Hammon N."/>
            <person name="Israni S."/>
            <person name="Dalin E."/>
            <person name="Tice H."/>
            <person name="Pitluck S."/>
            <person name="Saunders E."/>
            <person name="Brettin T."/>
            <person name="Bruce D."/>
            <person name="Han C."/>
            <person name="Tapia R."/>
            <person name="Schmutz J."/>
            <person name="Larimer F."/>
            <person name="Land M."/>
            <person name="Hauser L."/>
            <person name="Kyrpides N."/>
            <person name="Mikhailova N."/>
            <person name="Hoff W."/>
            <person name="Richardson P."/>
        </authorList>
    </citation>
    <scope>NUCLEOTIDE SEQUENCE [LARGE SCALE GENOMIC DNA]</scope>
    <source>
        <strain>DSM 244 / SL1</strain>
    </source>
</reference>
<protein>
    <recommendedName>
        <fullName evidence="1">Small ribosomal subunit protein uS17</fullName>
    </recommendedName>
    <alternativeName>
        <fullName evidence="2">30S ribosomal protein S17</fullName>
    </alternativeName>
</protein>
<name>RS17_HALHL</name>
<keyword id="KW-1185">Reference proteome</keyword>
<keyword id="KW-0687">Ribonucleoprotein</keyword>
<keyword id="KW-0689">Ribosomal protein</keyword>
<keyword id="KW-0694">RNA-binding</keyword>
<keyword id="KW-0699">rRNA-binding</keyword>
<gene>
    <name evidence="1" type="primary">rpsQ</name>
    <name type="ordered locus">Hhal_0849</name>
</gene>
<accession>A1WVB3</accession>
<proteinExistence type="inferred from homology"/>
<evidence type="ECO:0000255" key="1">
    <source>
        <dbReference type="HAMAP-Rule" id="MF_01345"/>
    </source>
</evidence>
<evidence type="ECO:0000305" key="2"/>
<sequence length="86" mass="9975">MSEEKNTRTVNGRVVSSKMDKTLTVLVERRVKHPLYGKFIRRSTKLHAHDEGNEGREGDWVSIQECRPLSKNKTWRLVKVLERAAS</sequence>
<organism>
    <name type="scientific">Halorhodospira halophila (strain DSM 244 / SL1)</name>
    <name type="common">Ectothiorhodospira halophila (strain DSM 244 / SL1)</name>
    <dbReference type="NCBI Taxonomy" id="349124"/>
    <lineage>
        <taxon>Bacteria</taxon>
        <taxon>Pseudomonadati</taxon>
        <taxon>Pseudomonadota</taxon>
        <taxon>Gammaproteobacteria</taxon>
        <taxon>Chromatiales</taxon>
        <taxon>Ectothiorhodospiraceae</taxon>
        <taxon>Halorhodospira</taxon>
    </lineage>
</organism>
<feature type="chain" id="PRO_1000054962" description="Small ribosomal subunit protein uS17">
    <location>
        <begin position="1"/>
        <end position="86"/>
    </location>
</feature>